<evidence type="ECO:0000255" key="1">
    <source>
        <dbReference type="HAMAP-Rule" id="MF_01393"/>
    </source>
</evidence>
<gene>
    <name evidence="1" type="primary">atpB</name>
    <name type="ordered locus">ECUMN_4268</name>
</gene>
<accession>B7NF54</accession>
<comment type="function">
    <text evidence="1">Key component of the proton channel; it plays a direct role in the translocation of protons across the membrane.</text>
</comment>
<comment type="subunit">
    <text evidence="1">F-type ATPases have 2 components, CF(1) - the catalytic core - and CF(0) - the membrane proton channel. CF(1) has five subunits: alpha(3), beta(3), gamma(1), delta(1), epsilon(1). CF(0) has three main subunits: a(1), b(2) and c(9-12). The alpha and beta chains form an alternating ring which encloses part of the gamma chain. CF(1) is attached to CF(0) by a central stalk formed by the gamma and epsilon chains, while a peripheral stalk is formed by the delta and b chains.</text>
</comment>
<comment type="subcellular location">
    <subcellularLocation>
        <location evidence="1">Cell inner membrane</location>
        <topology evidence="1">Multi-pass membrane protein</topology>
    </subcellularLocation>
</comment>
<comment type="similarity">
    <text evidence="1">Belongs to the ATPase A chain family.</text>
</comment>
<feature type="chain" id="PRO_1000145273" description="ATP synthase subunit a">
    <location>
        <begin position="1"/>
        <end position="271"/>
    </location>
</feature>
<feature type="transmembrane region" description="Helical" evidence="1">
    <location>
        <begin position="40"/>
        <end position="60"/>
    </location>
</feature>
<feature type="transmembrane region" description="Helical" evidence="1">
    <location>
        <begin position="100"/>
        <end position="120"/>
    </location>
</feature>
<feature type="transmembrane region" description="Helical" evidence="1">
    <location>
        <begin position="146"/>
        <end position="166"/>
    </location>
</feature>
<feature type="transmembrane region" description="Helical" evidence="1">
    <location>
        <begin position="220"/>
        <end position="240"/>
    </location>
</feature>
<feature type="transmembrane region" description="Helical" evidence="1">
    <location>
        <begin position="242"/>
        <end position="262"/>
    </location>
</feature>
<proteinExistence type="inferred from homology"/>
<dbReference type="EMBL" id="CU928163">
    <property type="protein sequence ID" value="CAR15408.1"/>
    <property type="molecule type" value="Genomic_DNA"/>
</dbReference>
<dbReference type="RefSeq" id="WP_000135618.1">
    <property type="nucleotide sequence ID" value="NC_011751.1"/>
</dbReference>
<dbReference type="RefSeq" id="YP_002414903.1">
    <property type="nucleotide sequence ID" value="NC_011751.1"/>
</dbReference>
<dbReference type="SMR" id="B7NF54"/>
<dbReference type="STRING" id="585056.ECUMN_4268"/>
<dbReference type="GeneID" id="86948620"/>
<dbReference type="KEGG" id="eum:ECUMN_4268"/>
<dbReference type="PATRIC" id="fig|585056.7.peg.4439"/>
<dbReference type="HOGENOM" id="CLU_041018_1_0_6"/>
<dbReference type="Proteomes" id="UP000007097">
    <property type="component" value="Chromosome"/>
</dbReference>
<dbReference type="GO" id="GO:0005886">
    <property type="term" value="C:plasma membrane"/>
    <property type="evidence" value="ECO:0007669"/>
    <property type="project" value="UniProtKB-SubCell"/>
</dbReference>
<dbReference type="GO" id="GO:0045259">
    <property type="term" value="C:proton-transporting ATP synthase complex"/>
    <property type="evidence" value="ECO:0007669"/>
    <property type="project" value="UniProtKB-KW"/>
</dbReference>
<dbReference type="GO" id="GO:0046933">
    <property type="term" value="F:proton-transporting ATP synthase activity, rotational mechanism"/>
    <property type="evidence" value="ECO:0007669"/>
    <property type="project" value="UniProtKB-UniRule"/>
</dbReference>
<dbReference type="GO" id="GO:0042777">
    <property type="term" value="P:proton motive force-driven plasma membrane ATP synthesis"/>
    <property type="evidence" value="ECO:0007669"/>
    <property type="project" value="TreeGrafter"/>
</dbReference>
<dbReference type="CDD" id="cd00310">
    <property type="entry name" value="ATP-synt_Fo_a_6"/>
    <property type="match status" value="1"/>
</dbReference>
<dbReference type="FunFam" id="1.20.120.220:FF:000002">
    <property type="entry name" value="ATP synthase subunit a"/>
    <property type="match status" value="1"/>
</dbReference>
<dbReference type="Gene3D" id="1.20.120.220">
    <property type="entry name" value="ATP synthase, F0 complex, subunit A"/>
    <property type="match status" value="1"/>
</dbReference>
<dbReference type="HAMAP" id="MF_01393">
    <property type="entry name" value="ATP_synth_a_bact"/>
    <property type="match status" value="1"/>
</dbReference>
<dbReference type="InterPro" id="IPR045082">
    <property type="entry name" value="ATP_syn_F0_a_bact/chloroplast"/>
</dbReference>
<dbReference type="InterPro" id="IPR000568">
    <property type="entry name" value="ATP_synth_F0_asu"/>
</dbReference>
<dbReference type="InterPro" id="IPR023011">
    <property type="entry name" value="ATP_synth_F0_asu_AS"/>
</dbReference>
<dbReference type="InterPro" id="IPR035908">
    <property type="entry name" value="F0_ATP_A_sf"/>
</dbReference>
<dbReference type="NCBIfam" id="TIGR01131">
    <property type="entry name" value="ATP_synt_6_or_A"/>
    <property type="match status" value="1"/>
</dbReference>
<dbReference type="NCBIfam" id="NF004477">
    <property type="entry name" value="PRK05815.1-1"/>
    <property type="match status" value="1"/>
</dbReference>
<dbReference type="PANTHER" id="PTHR42823">
    <property type="entry name" value="ATP SYNTHASE SUBUNIT A, CHLOROPLASTIC"/>
    <property type="match status" value="1"/>
</dbReference>
<dbReference type="PANTHER" id="PTHR42823:SF3">
    <property type="entry name" value="ATP SYNTHASE SUBUNIT A, CHLOROPLASTIC"/>
    <property type="match status" value="1"/>
</dbReference>
<dbReference type="Pfam" id="PF00119">
    <property type="entry name" value="ATP-synt_A"/>
    <property type="match status" value="1"/>
</dbReference>
<dbReference type="PRINTS" id="PR00123">
    <property type="entry name" value="ATPASEA"/>
</dbReference>
<dbReference type="SUPFAM" id="SSF81336">
    <property type="entry name" value="F1F0 ATP synthase subunit A"/>
    <property type="match status" value="1"/>
</dbReference>
<dbReference type="PROSITE" id="PS00449">
    <property type="entry name" value="ATPASE_A"/>
    <property type="match status" value="1"/>
</dbReference>
<sequence>MASENMTPQDYIGHHLNNLQLDLRTFSLVDPHNPPATFWTINIDSMFFSVVLGLLFLVLFRSVAKKATSGVPGKFQTAIELVIGFVNGSVKDMYHGKSKLIAPLALTIFVWVFLMNLMDLLPIDLLPYIAEHVLGLPALRVVPSADVNVTLSMALGVFILILFYSIKMKGIGGFTKELTLQPFNHWAFIPVNLILEGVSLLSKPVSLGLRLFGNMYAGELIFILIAGLLPWWSQWILNVPWAIFHILIITLQAFIFMVLTIVYLSMASEEH</sequence>
<name>ATP6_ECOLU</name>
<organism>
    <name type="scientific">Escherichia coli O17:K52:H18 (strain UMN026 / ExPEC)</name>
    <dbReference type="NCBI Taxonomy" id="585056"/>
    <lineage>
        <taxon>Bacteria</taxon>
        <taxon>Pseudomonadati</taxon>
        <taxon>Pseudomonadota</taxon>
        <taxon>Gammaproteobacteria</taxon>
        <taxon>Enterobacterales</taxon>
        <taxon>Enterobacteriaceae</taxon>
        <taxon>Escherichia</taxon>
    </lineage>
</organism>
<keyword id="KW-0066">ATP synthesis</keyword>
<keyword id="KW-0997">Cell inner membrane</keyword>
<keyword id="KW-1003">Cell membrane</keyword>
<keyword id="KW-0138">CF(0)</keyword>
<keyword id="KW-0375">Hydrogen ion transport</keyword>
<keyword id="KW-0406">Ion transport</keyword>
<keyword id="KW-0472">Membrane</keyword>
<keyword id="KW-0812">Transmembrane</keyword>
<keyword id="KW-1133">Transmembrane helix</keyword>
<keyword id="KW-0813">Transport</keyword>
<protein>
    <recommendedName>
        <fullName evidence="1">ATP synthase subunit a</fullName>
    </recommendedName>
    <alternativeName>
        <fullName evidence="1">ATP synthase F0 sector subunit a</fullName>
    </alternativeName>
    <alternativeName>
        <fullName evidence="1">F-ATPase subunit 6</fullName>
    </alternativeName>
</protein>
<reference key="1">
    <citation type="journal article" date="2009" name="PLoS Genet.">
        <title>Organised genome dynamics in the Escherichia coli species results in highly diverse adaptive paths.</title>
        <authorList>
            <person name="Touchon M."/>
            <person name="Hoede C."/>
            <person name="Tenaillon O."/>
            <person name="Barbe V."/>
            <person name="Baeriswyl S."/>
            <person name="Bidet P."/>
            <person name="Bingen E."/>
            <person name="Bonacorsi S."/>
            <person name="Bouchier C."/>
            <person name="Bouvet O."/>
            <person name="Calteau A."/>
            <person name="Chiapello H."/>
            <person name="Clermont O."/>
            <person name="Cruveiller S."/>
            <person name="Danchin A."/>
            <person name="Diard M."/>
            <person name="Dossat C."/>
            <person name="Karoui M.E."/>
            <person name="Frapy E."/>
            <person name="Garry L."/>
            <person name="Ghigo J.M."/>
            <person name="Gilles A.M."/>
            <person name="Johnson J."/>
            <person name="Le Bouguenec C."/>
            <person name="Lescat M."/>
            <person name="Mangenot S."/>
            <person name="Martinez-Jehanne V."/>
            <person name="Matic I."/>
            <person name="Nassif X."/>
            <person name="Oztas S."/>
            <person name="Petit M.A."/>
            <person name="Pichon C."/>
            <person name="Rouy Z."/>
            <person name="Ruf C.S."/>
            <person name="Schneider D."/>
            <person name="Tourret J."/>
            <person name="Vacherie B."/>
            <person name="Vallenet D."/>
            <person name="Medigue C."/>
            <person name="Rocha E.P.C."/>
            <person name="Denamur E."/>
        </authorList>
    </citation>
    <scope>NUCLEOTIDE SEQUENCE [LARGE SCALE GENOMIC DNA]</scope>
    <source>
        <strain>UMN026 / ExPEC</strain>
    </source>
</reference>